<dbReference type="EMBL" id="AE008923">
    <property type="protein sequence ID" value="AAM35832.1"/>
    <property type="molecule type" value="Genomic_DNA"/>
</dbReference>
<dbReference type="RefSeq" id="WP_005915585.1">
    <property type="nucleotide sequence ID" value="NC_003919.1"/>
</dbReference>
<dbReference type="SMR" id="Q8PNU5"/>
<dbReference type="GeneID" id="66910130"/>
<dbReference type="KEGG" id="xac:XAC0944"/>
<dbReference type="eggNOG" id="COG0216">
    <property type="taxonomic scope" value="Bacteria"/>
</dbReference>
<dbReference type="HOGENOM" id="CLU_036856_0_1_6"/>
<dbReference type="Proteomes" id="UP000000576">
    <property type="component" value="Chromosome"/>
</dbReference>
<dbReference type="GO" id="GO:0005737">
    <property type="term" value="C:cytoplasm"/>
    <property type="evidence" value="ECO:0007669"/>
    <property type="project" value="UniProtKB-SubCell"/>
</dbReference>
<dbReference type="GO" id="GO:0016149">
    <property type="term" value="F:translation release factor activity, codon specific"/>
    <property type="evidence" value="ECO:0007669"/>
    <property type="project" value="UniProtKB-UniRule"/>
</dbReference>
<dbReference type="FunFam" id="3.30.160.20:FF:000004">
    <property type="entry name" value="Peptide chain release factor 1"/>
    <property type="match status" value="1"/>
</dbReference>
<dbReference type="FunFam" id="3.30.70.1660:FF:000002">
    <property type="entry name" value="Peptide chain release factor 1"/>
    <property type="match status" value="1"/>
</dbReference>
<dbReference type="FunFam" id="3.30.70.1660:FF:000004">
    <property type="entry name" value="Peptide chain release factor 1"/>
    <property type="match status" value="1"/>
</dbReference>
<dbReference type="Gene3D" id="3.30.160.20">
    <property type="match status" value="1"/>
</dbReference>
<dbReference type="Gene3D" id="3.30.70.1660">
    <property type="match status" value="2"/>
</dbReference>
<dbReference type="Gene3D" id="6.10.140.1950">
    <property type="match status" value="1"/>
</dbReference>
<dbReference type="HAMAP" id="MF_00093">
    <property type="entry name" value="Rel_fac_1"/>
    <property type="match status" value="1"/>
</dbReference>
<dbReference type="InterPro" id="IPR005139">
    <property type="entry name" value="PCRF"/>
</dbReference>
<dbReference type="InterPro" id="IPR000352">
    <property type="entry name" value="Pep_chain_release_fac_I"/>
</dbReference>
<dbReference type="InterPro" id="IPR045853">
    <property type="entry name" value="Pep_chain_release_fac_I_sf"/>
</dbReference>
<dbReference type="InterPro" id="IPR050057">
    <property type="entry name" value="Prokaryotic/Mito_RF"/>
</dbReference>
<dbReference type="InterPro" id="IPR004373">
    <property type="entry name" value="RF-1"/>
</dbReference>
<dbReference type="NCBIfam" id="TIGR00019">
    <property type="entry name" value="prfA"/>
    <property type="match status" value="1"/>
</dbReference>
<dbReference type="NCBIfam" id="NF001859">
    <property type="entry name" value="PRK00591.1"/>
    <property type="match status" value="1"/>
</dbReference>
<dbReference type="PANTHER" id="PTHR43804">
    <property type="entry name" value="LD18447P"/>
    <property type="match status" value="1"/>
</dbReference>
<dbReference type="PANTHER" id="PTHR43804:SF7">
    <property type="entry name" value="LD18447P"/>
    <property type="match status" value="1"/>
</dbReference>
<dbReference type="Pfam" id="PF03462">
    <property type="entry name" value="PCRF"/>
    <property type="match status" value="1"/>
</dbReference>
<dbReference type="Pfam" id="PF00472">
    <property type="entry name" value="RF-1"/>
    <property type="match status" value="1"/>
</dbReference>
<dbReference type="SMART" id="SM00937">
    <property type="entry name" value="PCRF"/>
    <property type="match status" value="1"/>
</dbReference>
<dbReference type="SUPFAM" id="SSF75620">
    <property type="entry name" value="Release factor"/>
    <property type="match status" value="1"/>
</dbReference>
<dbReference type="PROSITE" id="PS00745">
    <property type="entry name" value="RF_PROK_I"/>
    <property type="match status" value="1"/>
</dbReference>
<proteinExistence type="inferred from homology"/>
<protein>
    <recommendedName>
        <fullName evidence="1">Peptide chain release factor 1</fullName>
        <shortName evidence="1">RF-1</shortName>
    </recommendedName>
</protein>
<accession>Q8PNU5</accession>
<feature type="chain" id="PRO_0000177772" description="Peptide chain release factor 1">
    <location>
        <begin position="1"/>
        <end position="361"/>
    </location>
</feature>
<feature type="region of interest" description="Disordered" evidence="2">
    <location>
        <begin position="288"/>
        <end position="307"/>
    </location>
</feature>
<feature type="modified residue" description="N5-methylglutamine" evidence="1">
    <location>
        <position position="235"/>
    </location>
</feature>
<name>RF1_XANAC</name>
<reference key="1">
    <citation type="journal article" date="2002" name="Nature">
        <title>Comparison of the genomes of two Xanthomonas pathogens with differing host specificities.</title>
        <authorList>
            <person name="da Silva A.C.R."/>
            <person name="Ferro J.A."/>
            <person name="Reinach F.C."/>
            <person name="Farah C.S."/>
            <person name="Furlan L.R."/>
            <person name="Quaggio R.B."/>
            <person name="Monteiro-Vitorello C.B."/>
            <person name="Van Sluys M.A."/>
            <person name="Almeida N.F. Jr."/>
            <person name="Alves L.M.C."/>
            <person name="do Amaral A.M."/>
            <person name="Bertolini M.C."/>
            <person name="Camargo L.E.A."/>
            <person name="Camarotte G."/>
            <person name="Cannavan F."/>
            <person name="Cardozo J."/>
            <person name="Chambergo F."/>
            <person name="Ciapina L.P."/>
            <person name="Cicarelli R.M.B."/>
            <person name="Coutinho L.L."/>
            <person name="Cursino-Santos J.R."/>
            <person name="El-Dorry H."/>
            <person name="Faria J.B."/>
            <person name="Ferreira A.J.S."/>
            <person name="Ferreira R.C.C."/>
            <person name="Ferro M.I.T."/>
            <person name="Formighieri E.F."/>
            <person name="Franco M.C."/>
            <person name="Greggio C.C."/>
            <person name="Gruber A."/>
            <person name="Katsuyama A.M."/>
            <person name="Kishi L.T."/>
            <person name="Leite R.P."/>
            <person name="Lemos E.G.M."/>
            <person name="Lemos M.V.F."/>
            <person name="Locali E.C."/>
            <person name="Machado M.A."/>
            <person name="Madeira A.M.B.N."/>
            <person name="Martinez-Rossi N.M."/>
            <person name="Martins E.C."/>
            <person name="Meidanis J."/>
            <person name="Menck C.F.M."/>
            <person name="Miyaki C.Y."/>
            <person name="Moon D.H."/>
            <person name="Moreira L.M."/>
            <person name="Novo M.T.M."/>
            <person name="Okura V.K."/>
            <person name="Oliveira M.C."/>
            <person name="Oliveira V.R."/>
            <person name="Pereira H.A."/>
            <person name="Rossi A."/>
            <person name="Sena J.A.D."/>
            <person name="Silva C."/>
            <person name="de Souza R.F."/>
            <person name="Spinola L.A.F."/>
            <person name="Takita M.A."/>
            <person name="Tamura R.E."/>
            <person name="Teixeira E.C."/>
            <person name="Tezza R.I.D."/>
            <person name="Trindade dos Santos M."/>
            <person name="Truffi D."/>
            <person name="Tsai S.M."/>
            <person name="White F.F."/>
            <person name="Setubal J.C."/>
            <person name="Kitajima J.P."/>
        </authorList>
    </citation>
    <scope>NUCLEOTIDE SEQUENCE [LARGE SCALE GENOMIC DNA]</scope>
    <source>
        <strain>306</strain>
    </source>
</reference>
<keyword id="KW-0963">Cytoplasm</keyword>
<keyword id="KW-0488">Methylation</keyword>
<keyword id="KW-0648">Protein biosynthesis</keyword>
<organism>
    <name type="scientific">Xanthomonas axonopodis pv. citri (strain 306)</name>
    <dbReference type="NCBI Taxonomy" id="190486"/>
    <lineage>
        <taxon>Bacteria</taxon>
        <taxon>Pseudomonadati</taxon>
        <taxon>Pseudomonadota</taxon>
        <taxon>Gammaproteobacteria</taxon>
        <taxon>Lysobacterales</taxon>
        <taxon>Lysobacteraceae</taxon>
        <taxon>Xanthomonas</taxon>
    </lineage>
</organism>
<sequence>MTPTLRRKLQALAERREELQHLLSDPDVVGNNDTFRTLSRELSQLEPVAVALEEEARAKADLATAEALRNDPEMRELAEEEIAAAQARLEQLDAQLASLLVPRDPRDDGNLFLEVRAGTGGDEAAIFAGDLFRMYARYAERQGWKVEIESDSPGEHGGYKEVVARVVGRGAYSRLKFESGTHRVQRVPATESQGRIHTSAATVAIIPEADDVEEITINPADLKVDTFRSSGAGGQHVNKTESAIRITHVPSGVVVECQTERSQHANRDKAMKRLKAQLLDTERSKAAAAEAQTRKLQVGSGDRSQRIRTYSFPQGRITDHRVEGLTLYDLPNIIEGDLDALIGRLLHEHQADELARLSDSP</sequence>
<comment type="function">
    <text evidence="1">Peptide chain release factor 1 directs the termination of translation in response to the peptide chain termination codons UAG and UAA.</text>
</comment>
<comment type="subcellular location">
    <subcellularLocation>
        <location evidence="1">Cytoplasm</location>
    </subcellularLocation>
</comment>
<comment type="PTM">
    <text evidence="1">Methylated by PrmC. Methylation increases the termination efficiency of RF1.</text>
</comment>
<comment type="similarity">
    <text evidence="1">Belongs to the prokaryotic/mitochondrial release factor family.</text>
</comment>
<gene>
    <name evidence="1" type="primary">prfA</name>
    <name type="ordered locus">XAC0944</name>
</gene>
<evidence type="ECO:0000255" key="1">
    <source>
        <dbReference type="HAMAP-Rule" id="MF_00093"/>
    </source>
</evidence>
<evidence type="ECO:0000256" key="2">
    <source>
        <dbReference type="SAM" id="MobiDB-lite"/>
    </source>
</evidence>